<protein>
    <recommendedName>
        <fullName>Probable iron transport system membrane protein HI_0359</fullName>
    </recommendedName>
</protein>
<accession>P44660</accession>
<reference key="1">
    <citation type="journal article" date="1995" name="Science">
        <title>Whole-genome random sequencing and assembly of Haemophilus influenzae Rd.</title>
        <authorList>
            <person name="Fleischmann R.D."/>
            <person name="Adams M.D."/>
            <person name="White O."/>
            <person name="Clayton R.A."/>
            <person name="Kirkness E.F."/>
            <person name="Kerlavage A.R."/>
            <person name="Bult C.J."/>
            <person name="Tomb J.-F."/>
            <person name="Dougherty B.A."/>
            <person name="Merrick J.M."/>
            <person name="McKenney K."/>
            <person name="Sutton G.G."/>
            <person name="FitzHugh W."/>
            <person name="Fields C.A."/>
            <person name="Gocayne J.D."/>
            <person name="Scott J.D."/>
            <person name="Shirley R."/>
            <person name="Liu L.-I."/>
            <person name="Glodek A."/>
            <person name="Kelley J.M."/>
            <person name="Weidman J.F."/>
            <person name="Phillips C.A."/>
            <person name="Spriggs T."/>
            <person name="Hedblom E."/>
            <person name="Cotton M.D."/>
            <person name="Utterback T.R."/>
            <person name="Hanna M.C."/>
            <person name="Nguyen D.T."/>
            <person name="Saudek D.M."/>
            <person name="Brandon R.C."/>
            <person name="Fine L.D."/>
            <person name="Fritchman J.L."/>
            <person name="Fuhrmann J.L."/>
            <person name="Geoghagen N.S.M."/>
            <person name="Gnehm C.L."/>
            <person name="McDonald L.A."/>
            <person name="Small K.V."/>
            <person name="Fraser C.M."/>
            <person name="Smith H.O."/>
            <person name="Venter J.C."/>
        </authorList>
    </citation>
    <scope>NUCLEOTIDE SEQUENCE [LARGE SCALE GENOMIC DNA]</scope>
    <source>
        <strain>ATCC 51907 / DSM 11121 / KW20 / Rd</strain>
    </source>
</reference>
<sequence>MFDWLLEPLQFEFMQNALLTALIVSIICALLSCYLVLKGWSLMGDAISHAVLPGIVLAYLAGIPLAIGAFFSGIFCSLGVGYLKENSRIKEDTAMGIVFSGMFAIGLVMFTKIQTEEHLTHILFGNVLGVSHQELIQSAVISAIIFCLIVFKRKDFLLYCFDPSHARVAGLSPKILHYGLLILLALTIVSTMQVVGVILVVAMLIAPGITALTLTKSFDKMLWVAIASSIASSLIGVILSYHFDASTGACIILLQAAFFVIALAYSKIRIR</sequence>
<comment type="function">
    <text evidence="2">Part of an ATP-driven transport system HI_0359/HI_0360/HI_0361/HI_0362 for iron.</text>
</comment>
<comment type="subcellular location">
    <subcellularLocation>
        <location evidence="2">Cell inner membrane</location>
        <topology evidence="2">Multi-pass membrane protein</topology>
    </subcellularLocation>
</comment>
<comment type="similarity">
    <text evidence="2">Belongs to the ABC-3 integral membrane protein family.</text>
</comment>
<proteinExistence type="inferred from homology"/>
<dbReference type="EMBL" id="L42023">
    <property type="protein sequence ID" value="AAC22018.1"/>
    <property type="molecule type" value="Genomic_DNA"/>
</dbReference>
<dbReference type="PIR" id="G64149">
    <property type="entry name" value="G64149"/>
</dbReference>
<dbReference type="RefSeq" id="NP_438521.1">
    <property type="nucleotide sequence ID" value="NC_000907.1"/>
</dbReference>
<dbReference type="SMR" id="P44660"/>
<dbReference type="STRING" id="71421.HI_0359"/>
<dbReference type="EnsemblBacteria" id="AAC22018">
    <property type="protein sequence ID" value="AAC22018"/>
    <property type="gene ID" value="HI_0359"/>
</dbReference>
<dbReference type="KEGG" id="hin:HI_0359"/>
<dbReference type="PATRIC" id="fig|71421.8.peg.377"/>
<dbReference type="eggNOG" id="COG1108">
    <property type="taxonomic scope" value="Bacteria"/>
</dbReference>
<dbReference type="HOGENOM" id="CLU_028808_4_0_6"/>
<dbReference type="OrthoDB" id="9804300at2"/>
<dbReference type="PhylomeDB" id="P44660"/>
<dbReference type="BioCyc" id="HINF71421:G1GJ1-373-MONOMER"/>
<dbReference type="Proteomes" id="UP000000579">
    <property type="component" value="Chromosome"/>
</dbReference>
<dbReference type="GO" id="GO:0043190">
    <property type="term" value="C:ATP-binding cassette (ABC) transporter complex"/>
    <property type="evidence" value="ECO:0007669"/>
    <property type="project" value="InterPro"/>
</dbReference>
<dbReference type="GO" id="GO:0005886">
    <property type="term" value="C:plasma membrane"/>
    <property type="evidence" value="ECO:0000318"/>
    <property type="project" value="GO_Central"/>
</dbReference>
<dbReference type="GO" id="GO:0006826">
    <property type="term" value="P:iron ion transport"/>
    <property type="evidence" value="ECO:0007669"/>
    <property type="project" value="UniProtKB-KW"/>
</dbReference>
<dbReference type="GO" id="GO:0010043">
    <property type="term" value="P:response to zinc ion"/>
    <property type="evidence" value="ECO:0000318"/>
    <property type="project" value="GO_Central"/>
</dbReference>
<dbReference type="GO" id="GO:0055085">
    <property type="term" value="P:transmembrane transport"/>
    <property type="evidence" value="ECO:0007669"/>
    <property type="project" value="InterPro"/>
</dbReference>
<dbReference type="CDD" id="cd06550">
    <property type="entry name" value="TM_ABC_iron-siderophores_like"/>
    <property type="match status" value="1"/>
</dbReference>
<dbReference type="FunFam" id="1.10.3470.10:FF:000003">
    <property type="entry name" value="Iron ABC transporter permease SitD"/>
    <property type="match status" value="1"/>
</dbReference>
<dbReference type="Gene3D" id="1.10.3470.10">
    <property type="entry name" value="ABC transporter involved in vitamin B12 uptake, BtuC"/>
    <property type="match status" value="1"/>
</dbReference>
<dbReference type="InterPro" id="IPR037294">
    <property type="entry name" value="ABC_BtuC-like"/>
</dbReference>
<dbReference type="InterPro" id="IPR001626">
    <property type="entry name" value="ABC_TroCD"/>
</dbReference>
<dbReference type="PANTHER" id="PTHR30477">
    <property type="entry name" value="ABC-TRANSPORTER METAL-BINDING PROTEIN"/>
    <property type="match status" value="1"/>
</dbReference>
<dbReference type="PANTHER" id="PTHR30477:SF24">
    <property type="entry name" value="IRON TRANSPORT SYSTEM MEMBRANE PROTEIN HI_0359-RELATED"/>
    <property type="match status" value="1"/>
</dbReference>
<dbReference type="Pfam" id="PF00950">
    <property type="entry name" value="ABC-3"/>
    <property type="match status" value="1"/>
</dbReference>
<dbReference type="SUPFAM" id="SSF81345">
    <property type="entry name" value="ABC transporter involved in vitamin B12 uptake, BtuC"/>
    <property type="match status" value="1"/>
</dbReference>
<name>Y359_HAEIN</name>
<organism>
    <name type="scientific">Haemophilus influenzae (strain ATCC 51907 / DSM 11121 / KW20 / Rd)</name>
    <dbReference type="NCBI Taxonomy" id="71421"/>
    <lineage>
        <taxon>Bacteria</taxon>
        <taxon>Pseudomonadati</taxon>
        <taxon>Pseudomonadota</taxon>
        <taxon>Gammaproteobacteria</taxon>
        <taxon>Pasteurellales</taxon>
        <taxon>Pasteurellaceae</taxon>
        <taxon>Haemophilus</taxon>
    </lineage>
</organism>
<feature type="chain" id="PRO_0000171172" description="Probable iron transport system membrane protein HI_0359">
    <location>
        <begin position="1"/>
        <end position="271"/>
    </location>
</feature>
<feature type="transmembrane region" description="Helical" evidence="1">
    <location>
        <begin position="17"/>
        <end position="37"/>
    </location>
</feature>
<feature type="transmembrane region" description="Helical" evidence="1">
    <location>
        <begin position="55"/>
        <end position="75"/>
    </location>
</feature>
<feature type="transmembrane region" description="Helical" evidence="1">
    <location>
        <begin position="93"/>
        <end position="113"/>
    </location>
</feature>
<feature type="transmembrane region" description="Helical" evidence="1">
    <location>
        <begin position="131"/>
        <end position="151"/>
    </location>
</feature>
<feature type="transmembrane region" description="Helical" evidence="1">
    <location>
        <begin position="168"/>
        <end position="188"/>
    </location>
</feature>
<feature type="transmembrane region" description="Helical" evidence="1">
    <location>
        <begin position="194"/>
        <end position="214"/>
    </location>
</feature>
<feature type="transmembrane region" description="Helical" evidence="1">
    <location>
        <begin position="221"/>
        <end position="241"/>
    </location>
</feature>
<feature type="transmembrane region" description="Helical" evidence="1">
    <location>
        <begin position="245"/>
        <end position="265"/>
    </location>
</feature>
<evidence type="ECO:0000255" key="1"/>
<evidence type="ECO:0000305" key="2"/>
<keyword id="KW-0997">Cell inner membrane</keyword>
<keyword id="KW-1003">Cell membrane</keyword>
<keyword id="KW-0406">Ion transport</keyword>
<keyword id="KW-0408">Iron</keyword>
<keyword id="KW-0410">Iron transport</keyword>
<keyword id="KW-0472">Membrane</keyword>
<keyword id="KW-1185">Reference proteome</keyword>
<keyword id="KW-0812">Transmembrane</keyword>
<keyword id="KW-1133">Transmembrane helix</keyword>
<keyword id="KW-0813">Transport</keyword>
<gene>
    <name type="ordered locus">HI_0359</name>
</gene>